<organism>
    <name type="scientific">Mus musculus</name>
    <name type="common">Mouse</name>
    <dbReference type="NCBI Taxonomy" id="10090"/>
    <lineage>
        <taxon>Eukaryota</taxon>
        <taxon>Metazoa</taxon>
        <taxon>Chordata</taxon>
        <taxon>Craniata</taxon>
        <taxon>Vertebrata</taxon>
        <taxon>Euteleostomi</taxon>
        <taxon>Mammalia</taxon>
        <taxon>Eutheria</taxon>
        <taxon>Euarchontoglires</taxon>
        <taxon>Glires</taxon>
        <taxon>Rodentia</taxon>
        <taxon>Myomorpha</taxon>
        <taxon>Muroidea</taxon>
        <taxon>Muridae</taxon>
        <taxon>Murinae</taxon>
        <taxon>Mus</taxon>
        <taxon>Mus</taxon>
    </lineage>
</organism>
<proteinExistence type="evidence at protein level"/>
<accession>Q61810</accession>
<accession>F8VQ06</accession>
<accession>Q8BNQ6</accession>
<sequence length="1253" mass="134363">MPGPRGAAHGLAPAMRQAGALGLLALLLLALLGPGGGAEGGPAGERGTGGGGALARERFKVVFAPVICKRTCLKGQCRDSCQQGSNMTLIGENGHSTDTLTGSGFRVVVCPLPCMNGGQCSSRNQCLCPPDFTGRFCQVPAAGTGAGTGSSGPGLARTGAMSTGPLPPLAPEGESVASKHAIYAVQVIADPPGPGEGPPAQHAAFLVPLGPGQISAEVQAPPPVVNVRVHHPPEASVQVHRIEGPNAEGPASSQHLLPHPKPQHPRPPTQKPLGRCFQDTLPKQPCGSNPLPGLTKQEDCCGSIGTAWGQSKCHKCPQLQYTGVQKPGPVRGEVGADCPQGYKRLNSTHCQDINECAMPGMCRHGDCLNNPGSYRCVCPPGHSLGPSRTQCIADKPEEKSLCFRLVSTEHQCQHPLTTRLTRQLCCCSVGKAWGARCQRCPADGTAAFKEICPAGKGYHILTSHQTLTIQGESDFSLFLHPDGPPKPQQLPESPSRAPPLEDTEEERGVTMDPPVSEERSVQQSHPTTTTSPPRPYPELISRPSPPTFHRFLPDLPPSRSAVEIAPTQVTETDECRLNQNICGHGQCVPGPSDYSCHCNAGYRSHPQHRYCVDVNECEAEPCGPGKGICMNTGGSYNCHCNRGYRLHVGAGGRSCVDLNECTKPHLCGDGGFCINFPGHYKCNCYPGYRLKASRPPICEDIDECRDPSTCPDGKCENKPGSFKCIACQPGYRSQGGGACRDVNECSEGTPCSPGWCENLPGSYRCTCAQGYEPAQDGLSCIDVDECEAGKVCQDGICTNTPGSFQCQCLSGYHLSRDRSRCEDIDECDFPAACIGGDCINTNGSYRCLCPQGHRLVGGRKCQDIDECSQDPGLCLPHGACENLQGSYVCVCDEGFTLTQDQHGCEEVEQPHHKKECYLNFDDTVFCDSVLATNVTQQECCCSLGAGWGDHCEIYPCPVYSSAEFHSLCPDGKGYTQDNNIVNYGIPAHRDIDECILFGAEICKEGKCVNTQPGYECYCKQGFYYDGNLLECVDVDECLDESNCRNGVCENTRGGYRCACTPPAEYSPAQRQCLSPEEMEHAPERREVCWGQRGEDGMCMGPLAGPALTFDDCCCRQGRGWGTQCRPCPPRGTGSQCPTSQSESNSFWDTSPLLLGKSPRDEDSSEEDSDECRCVSGRCVPRPGGAVCECPGGFQLDASRARCVDIDECRELNQRGLLCKSERCVNTSGSFRCVCKAGFTRSRPHGACVPQRRR</sequence>
<comment type="function">
    <text evidence="10 11">Key regulator of transforming growth factor beta (TGFB1, TGFB2 and TGFB3) that controls TGF-beta activation by maintaining it in a latent state during storage in extracellular space. Associates specifically via disulfide bonds with the Latency-associated peptide (LAP), which is the regulatory chain of TGF-beta, and regulates integrin-dependent activation of TGF-beta.</text>
</comment>
<comment type="subunit">
    <text evidence="2 7 9">Forms part of the large latent transforming growth factor beta (TGFB1) precursor complex; removal is essential for activation of complex. Interacts with EFEMP2 (By similarity).</text>
</comment>
<comment type="subcellular location">
    <subcellularLocation>
        <location evidence="2">Secreted</location>
    </subcellularLocation>
    <subcellularLocation>
        <location evidence="2">Secreted</location>
        <location evidence="2">Extracellular space</location>
        <location evidence="2">Extracellular matrix</location>
    </subcellularLocation>
    <text evidence="2">Secretion occurs after coexpression with TGFB1 and requires complexing with 'Cys-33' of the TGFB1 propeptide.</text>
</comment>
<comment type="alternative products">
    <event type="alternative splicing"/>
    <isoform>
        <id>Q61810-1</id>
        <name>1</name>
        <sequence type="displayed"/>
    </isoform>
    <isoform>
        <id>Q61810-2</id>
        <name>2</name>
        <sequence type="described" ref="VSP_009242 VSP_009243"/>
    </isoform>
</comment>
<comment type="developmental stage">
    <text evidence="8">At 8.5-9.0 dpc highly expressed in liver. Significant expression was also seen in the developing central nervous, somites and cardiovascular tissue. At 13.5-16.5 dpc expression was seen in osteoblasts, respiratory epithelial cells, and nephrons and dermal connective tissue.</text>
</comment>
<comment type="PTM">
    <text evidence="1">Contains hydroxylated asparagine residues.</text>
</comment>
<comment type="PTM">
    <text evidence="1">Two intrachain disulfide bonds from the TB3 domain are rearranged upon TGFB1 binding, and form interchain bonds with TGFB1 propeptide, anchoring it to the extracellular matrix.</text>
</comment>
<comment type="similarity">
    <text evidence="13">Belongs to the LTBP family.</text>
</comment>
<comment type="sequence caution" evidence="13">
    <conflict type="erroneous initiation">
        <sequence resource="EMBL-CDS" id="AAB53015"/>
    </conflict>
    <text>Truncated N-terminus.</text>
</comment>
<comment type="sequence caution" evidence="13">
    <conflict type="frameshift">
        <sequence resource="EMBL-CDS" id="AAB53015"/>
    </conflict>
</comment>
<protein>
    <recommendedName>
        <fullName>Latent-transforming growth factor beta-binding protein 3</fullName>
        <shortName>LTBP-3</shortName>
    </recommendedName>
</protein>
<gene>
    <name type="primary">Ltbp3</name>
</gene>
<evidence type="ECO:0000250" key="1">
    <source>
        <dbReference type="UniProtKB" id="Q14766"/>
    </source>
</evidence>
<evidence type="ECO:0000250" key="2">
    <source>
        <dbReference type="UniProtKB" id="Q9NS15"/>
    </source>
</evidence>
<evidence type="ECO:0000255" key="3"/>
<evidence type="ECO:0000255" key="4">
    <source>
        <dbReference type="PROSITE-ProRule" id="PRU00076"/>
    </source>
</evidence>
<evidence type="ECO:0000255" key="5">
    <source>
        <dbReference type="PROSITE-ProRule" id="PRU00697"/>
    </source>
</evidence>
<evidence type="ECO:0000256" key="6">
    <source>
        <dbReference type="SAM" id="MobiDB-lite"/>
    </source>
</evidence>
<evidence type="ECO:0000269" key="7">
    <source>
    </source>
</evidence>
<evidence type="ECO:0000269" key="8">
    <source>
    </source>
</evidence>
<evidence type="ECO:0000269" key="9">
    <source>
    </source>
</evidence>
<evidence type="ECO:0000303" key="10">
    <source>
    </source>
</evidence>
<evidence type="ECO:0000303" key="11">
    <source>
    </source>
</evidence>
<evidence type="ECO:0000303" key="12">
    <source>
    </source>
</evidence>
<evidence type="ECO:0000305" key="13"/>
<reference key="1">
    <citation type="journal article" date="1995" name="J. Biol. Chem.">
        <title>Isolation of a novel latent transforming growth factor-beta binding protein gene (LTBP-3).</title>
        <authorList>
            <person name="Yin W."/>
            <person name="Smiley E."/>
            <person name="Germiller J."/>
            <person name="Mecham R.P."/>
            <person name="Florer J.B."/>
            <person name="Wenstrup R.J."/>
            <person name="Bonadio J."/>
        </authorList>
    </citation>
    <scope>NUCLEOTIDE SEQUENCE [MRNA] (ISOFORM 1)</scope>
    <scope>DEVELOPMENTAL STAGE</scope>
</reference>
<reference key="2">
    <citation type="journal article" date="2005" name="Science">
        <title>The transcriptional landscape of the mammalian genome.</title>
        <authorList>
            <person name="Carninci P."/>
            <person name="Kasukawa T."/>
            <person name="Katayama S."/>
            <person name="Gough J."/>
            <person name="Frith M.C."/>
            <person name="Maeda N."/>
            <person name="Oyama R."/>
            <person name="Ravasi T."/>
            <person name="Lenhard B."/>
            <person name="Wells C."/>
            <person name="Kodzius R."/>
            <person name="Shimokawa K."/>
            <person name="Bajic V.B."/>
            <person name="Brenner S.E."/>
            <person name="Batalov S."/>
            <person name="Forrest A.R."/>
            <person name="Zavolan M."/>
            <person name="Davis M.J."/>
            <person name="Wilming L.G."/>
            <person name="Aidinis V."/>
            <person name="Allen J.E."/>
            <person name="Ambesi-Impiombato A."/>
            <person name="Apweiler R."/>
            <person name="Aturaliya R.N."/>
            <person name="Bailey T.L."/>
            <person name="Bansal M."/>
            <person name="Baxter L."/>
            <person name="Beisel K.W."/>
            <person name="Bersano T."/>
            <person name="Bono H."/>
            <person name="Chalk A.M."/>
            <person name="Chiu K.P."/>
            <person name="Choudhary V."/>
            <person name="Christoffels A."/>
            <person name="Clutterbuck D.R."/>
            <person name="Crowe M.L."/>
            <person name="Dalla E."/>
            <person name="Dalrymple B.P."/>
            <person name="de Bono B."/>
            <person name="Della Gatta G."/>
            <person name="di Bernardo D."/>
            <person name="Down T."/>
            <person name="Engstrom P."/>
            <person name="Fagiolini M."/>
            <person name="Faulkner G."/>
            <person name="Fletcher C.F."/>
            <person name="Fukushima T."/>
            <person name="Furuno M."/>
            <person name="Futaki S."/>
            <person name="Gariboldi M."/>
            <person name="Georgii-Hemming P."/>
            <person name="Gingeras T.R."/>
            <person name="Gojobori T."/>
            <person name="Green R.E."/>
            <person name="Gustincich S."/>
            <person name="Harbers M."/>
            <person name="Hayashi Y."/>
            <person name="Hensch T.K."/>
            <person name="Hirokawa N."/>
            <person name="Hill D."/>
            <person name="Huminiecki L."/>
            <person name="Iacono M."/>
            <person name="Ikeo K."/>
            <person name="Iwama A."/>
            <person name="Ishikawa T."/>
            <person name="Jakt M."/>
            <person name="Kanapin A."/>
            <person name="Katoh M."/>
            <person name="Kawasawa Y."/>
            <person name="Kelso J."/>
            <person name="Kitamura H."/>
            <person name="Kitano H."/>
            <person name="Kollias G."/>
            <person name="Krishnan S.P."/>
            <person name="Kruger A."/>
            <person name="Kummerfeld S.K."/>
            <person name="Kurochkin I.V."/>
            <person name="Lareau L.F."/>
            <person name="Lazarevic D."/>
            <person name="Lipovich L."/>
            <person name="Liu J."/>
            <person name="Liuni S."/>
            <person name="McWilliam S."/>
            <person name="Madan Babu M."/>
            <person name="Madera M."/>
            <person name="Marchionni L."/>
            <person name="Matsuda H."/>
            <person name="Matsuzawa S."/>
            <person name="Miki H."/>
            <person name="Mignone F."/>
            <person name="Miyake S."/>
            <person name="Morris K."/>
            <person name="Mottagui-Tabar S."/>
            <person name="Mulder N."/>
            <person name="Nakano N."/>
            <person name="Nakauchi H."/>
            <person name="Ng P."/>
            <person name="Nilsson R."/>
            <person name="Nishiguchi S."/>
            <person name="Nishikawa S."/>
            <person name="Nori F."/>
            <person name="Ohara O."/>
            <person name="Okazaki Y."/>
            <person name="Orlando V."/>
            <person name="Pang K.C."/>
            <person name="Pavan W.J."/>
            <person name="Pavesi G."/>
            <person name="Pesole G."/>
            <person name="Petrovsky N."/>
            <person name="Piazza S."/>
            <person name="Reed J."/>
            <person name="Reid J.F."/>
            <person name="Ring B.Z."/>
            <person name="Ringwald M."/>
            <person name="Rost B."/>
            <person name="Ruan Y."/>
            <person name="Salzberg S.L."/>
            <person name="Sandelin A."/>
            <person name="Schneider C."/>
            <person name="Schoenbach C."/>
            <person name="Sekiguchi K."/>
            <person name="Semple C.A."/>
            <person name="Seno S."/>
            <person name="Sessa L."/>
            <person name="Sheng Y."/>
            <person name="Shibata Y."/>
            <person name="Shimada H."/>
            <person name="Shimada K."/>
            <person name="Silva D."/>
            <person name="Sinclair B."/>
            <person name="Sperling S."/>
            <person name="Stupka E."/>
            <person name="Sugiura K."/>
            <person name="Sultana R."/>
            <person name="Takenaka Y."/>
            <person name="Taki K."/>
            <person name="Tammoja K."/>
            <person name="Tan S.L."/>
            <person name="Tang S."/>
            <person name="Taylor M.S."/>
            <person name="Tegner J."/>
            <person name="Teichmann S.A."/>
            <person name="Ueda H.R."/>
            <person name="van Nimwegen E."/>
            <person name="Verardo R."/>
            <person name="Wei C.L."/>
            <person name="Yagi K."/>
            <person name="Yamanishi H."/>
            <person name="Zabarovsky E."/>
            <person name="Zhu S."/>
            <person name="Zimmer A."/>
            <person name="Hide W."/>
            <person name="Bult C."/>
            <person name="Grimmond S.M."/>
            <person name="Teasdale R.D."/>
            <person name="Liu E.T."/>
            <person name="Brusic V."/>
            <person name="Quackenbush J."/>
            <person name="Wahlestedt C."/>
            <person name="Mattick J.S."/>
            <person name="Hume D.A."/>
            <person name="Kai C."/>
            <person name="Sasaki D."/>
            <person name="Tomaru Y."/>
            <person name="Fukuda S."/>
            <person name="Kanamori-Katayama M."/>
            <person name="Suzuki M."/>
            <person name="Aoki J."/>
            <person name="Arakawa T."/>
            <person name="Iida J."/>
            <person name="Imamura K."/>
            <person name="Itoh M."/>
            <person name="Kato T."/>
            <person name="Kawaji H."/>
            <person name="Kawagashira N."/>
            <person name="Kawashima T."/>
            <person name="Kojima M."/>
            <person name="Kondo S."/>
            <person name="Konno H."/>
            <person name="Nakano K."/>
            <person name="Ninomiya N."/>
            <person name="Nishio T."/>
            <person name="Okada M."/>
            <person name="Plessy C."/>
            <person name="Shibata K."/>
            <person name="Shiraki T."/>
            <person name="Suzuki S."/>
            <person name="Tagami M."/>
            <person name="Waki K."/>
            <person name="Watahiki A."/>
            <person name="Okamura-Oho Y."/>
            <person name="Suzuki H."/>
            <person name="Kawai J."/>
            <person name="Hayashizaki Y."/>
        </authorList>
    </citation>
    <scope>NUCLEOTIDE SEQUENCE [LARGE SCALE MRNA] (ISOFORM 2)</scope>
    <source>
        <strain>C57BL/6J</strain>
        <tissue>Adipose tissue</tissue>
    </source>
</reference>
<reference key="3">
    <citation type="journal article" date="2009" name="PLoS Biol.">
        <title>Lineage-specific biology revealed by a finished genome assembly of the mouse.</title>
        <authorList>
            <person name="Church D.M."/>
            <person name="Goodstadt L."/>
            <person name="Hillier L.W."/>
            <person name="Zody M.C."/>
            <person name="Goldstein S."/>
            <person name="She X."/>
            <person name="Bult C.J."/>
            <person name="Agarwala R."/>
            <person name="Cherry J.L."/>
            <person name="DiCuccio M."/>
            <person name="Hlavina W."/>
            <person name="Kapustin Y."/>
            <person name="Meric P."/>
            <person name="Maglott D."/>
            <person name="Birtle Z."/>
            <person name="Marques A.C."/>
            <person name="Graves T."/>
            <person name="Zhou S."/>
            <person name="Teague B."/>
            <person name="Potamousis K."/>
            <person name="Churas C."/>
            <person name="Place M."/>
            <person name="Herschleb J."/>
            <person name="Runnheim R."/>
            <person name="Forrest D."/>
            <person name="Amos-Landgraf J."/>
            <person name="Schwartz D.C."/>
            <person name="Cheng Z."/>
            <person name="Lindblad-Toh K."/>
            <person name="Eichler E.E."/>
            <person name="Ponting C.P."/>
        </authorList>
    </citation>
    <scope>NUCLEOTIDE SEQUENCE [LARGE SCALE GENOMIC DNA]</scope>
    <source>
        <strain>C57BL/6J</strain>
    </source>
</reference>
<reference key="4">
    <citation type="journal article" date="1998" name="Biochim. Biophys. Acta">
        <title>8-cysteine TGF-BP structural motifs are the site of covalent binding between mouse LTBP-3, LTBP-2, and latent TGF-beta 1.</title>
        <authorList>
            <person name="Yin W."/>
            <person name="Fang J."/>
            <person name="Smiley E."/>
            <person name="Bonadio J."/>
        </authorList>
    </citation>
    <scope>INTERACTION WITH TGFB1</scope>
</reference>
<reference key="5">
    <citation type="journal article" date="2002" name="FEBS Lett.">
        <title>Latent TGF-beta binding protein-3 (LTBP-3) requires binding to TGF-beta for secretion.</title>
        <authorList>
            <person name="Chen Y."/>
            <person name="Dabovic B."/>
            <person name="Annes J.P."/>
            <person name="Rifkin D.B."/>
        </authorList>
    </citation>
    <scope>INTERACTION WITH TGFB1</scope>
</reference>
<reference key="6">
    <citation type="journal article" date="1999" name="Cytokine Growth Factor Rev.">
        <title>Latent transforming growth factor-beta binding proteins (LTBPs) -- structural extracellular matrix proteins for targeting TGF-beta action.</title>
        <authorList>
            <person name="Saharinen J."/>
            <person name="Hyytiainen M."/>
            <person name="Taipale J."/>
            <person name="Keski-Oja J."/>
        </authorList>
    </citation>
    <scope>REVIEW</scope>
</reference>
<reference key="7">
    <citation type="journal article" date="2000" name="Biochem. J.">
        <title>The latent transforming growth factor beta binding protein (LTBP) family.</title>
        <authorList>
            <person name="Oklu R."/>
            <person name="Hesketh R."/>
        </authorList>
    </citation>
    <scope>REVIEW</scope>
</reference>
<dbReference type="EMBL" id="L40459">
    <property type="protein sequence ID" value="AAB53015.1"/>
    <property type="status" value="ALT_SEQ"/>
    <property type="molecule type" value="mRNA"/>
</dbReference>
<dbReference type="EMBL" id="AK080869">
    <property type="protein sequence ID" value="BAC38053.1"/>
    <property type="molecule type" value="mRNA"/>
</dbReference>
<dbReference type="EMBL" id="AC134563">
    <property type="status" value="NOT_ANNOTATED_CDS"/>
    <property type="molecule type" value="Genomic_DNA"/>
</dbReference>
<dbReference type="CCDS" id="CCDS37891.1">
    <molecule id="Q61810-1"/>
</dbReference>
<dbReference type="PIR" id="A57293">
    <property type="entry name" value="A57293"/>
</dbReference>
<dbReference type="RefSeq" id="NP_032546.2">
    <molecule id="Q61810-1"/>
    <property type="nucleotide sequence ID" value="NM_008520.3"/>
</dbReference>
<dbReference type="RefSeq" id="XP_036017347.1">
    <molecule id="Q61810-1"/>
    <property type="nucleotide sequence ID" value="XM_036161454.1"/>
</dbReference>
<dbReference type="BioGRID" id="201221">
    <property type="interactions" value="7"/>
</dbReference>
<dbReference type="DIP" id="DIP-48641N"/>
<dbReference type="FunCoup" id="Q61810">
    <property type="interactions" value="165"/>
</dbReference>
<dbReference type="IntAct" id="Q61810">
    <property type="interactions" value="2"/>
</dbReference>
<dbReference type="STRING" id="10090.ENSMUSP00000080214"/>
<dbReference type="CarbonylDB" id="Q61810"/>
<dbReference type="GlyCosmos" id="Q61810">
    <property type="glycosylation" value="5 sites, No reported glycans"/>
</dbReference>
<dbReference type="GlyGen" id="Q61810">
    <property type="glycosylation" value="5 sites, 2 N-linked glycans (2 sites)"/>
</dbReference>
<dbReference type="iPTMnet" id="Q61810"/>
<dbReference type="PhosphoSitePlus" id="Q61810"/>
<dbReference type="jPOST" id="Q61810"/>
<dbReference type="PaxDb" id="10090-ENSMUSP00000080214"/>
<dbReference type="PeptideAtlas" id="Q61810"/>
<dbReference type="ProteomicsDB" id="290185">
    <molecule id="Q61810-1"/>
</dbReference>
<dbReference type="ProteomicsDB" id="290186">
    <molecule id="Q61810-2"/>
</dbReference>
<dbReference type="ProteomicsDB" id="346857"/>
<dbReference type="Pumba" id="Q61810"/>
<dbReference type="Antibodypedia" id="70903">
    <property type="antibodies" value="9 antibodies from 9 providers"/>
</dbReference>
<dbReference type="DNASU" id="16998"/>
<dbReference type="Ensembl" id="ENSMUST00000081496.6">
    <molecule id="Q61810-1"/>
    <property type="protein sequence ID" value="ENSMUSP00000080214.6"/>
    <property type="gene ID" value="ENSMUSG00000024940.12"/>
</dbReference>
<dbReference type="GeneID" id="16998"/>
<dbReference type="KEGG" id="mmu:16998"/>
<dbReference type="AGR" id="MGI:1101355"/>
<dbReference type="CTD" id="4054"/>
<dbReference type="MGI" id="MGI:1101355">
    <property type="gene designation" value="Ltbp3"/>
</dbReference>
<dbReference type="VEuPathDB" id="HostDB:ENSMUSG00000024940"/>
<dbReference type="eggNOG" id="KOG1217">
    <property type="taxonomic scope" value="Eukaryota"/>
</dbReference>
<dbReference type="GeneTree" id="ENSGT00940000160285"/>
<dbReference type="HOGENOM" id="CLU_001884_1_0_1"/>
<dbReference type="InParanoid" id="Q61810"/>
<dbReference type="OMA" id="QKGVRSC"/>
<dbReference type="PhylomeDB" id="Q61810"/>
<dbReference type="TreeFam" id="TF317514"/>
<dbReference type="Reactome" id="R-MMU-2129379">
    <property type="pathway name" value="Molecules associated with elastic fibres"/>
</dbReference>
<dbReference type="Reactome" id="R-MMU-2173789">
    <property type="pathway name" value="TGF-beta receptor signaling activates SMADs"/>
</dbReference>
<dbReference type="BioGRID-ORCS" id="16998">
    <property type="hits" value="1 hit in 61 CRISPR screens"/>
</dbReference>
<dbReference type="ChiTaRS" id="Ltbp3">
    <property type="organism name" value="mouse"/>
</dbReference>
<dbReference type="PRO" id="PR:Q61810"/>
<dbReference type="Proteomes" id="UP000000589">
    <property type="component" value="Chromosome 19"/>
</dbReference>
<dbReference type="RNAct" id="Q61810">
    <property type="molecule type" value="protein"/>
</dbReference>
<dbReference type="Bgee" id="ENSMUSG00000024940">
    <property type="expression patterns" value="Expressed in ciliary body and 293 other cell types or tissues"/>
</dbReference>
<dbReference type="ExpressionAtlas" id="Q61810">
    <property type="expression patterns" value="baseline and differential"/>
</dbReference>
<dbReference type="GO" id="GO:0031012">
    <property type="term" value="C:extracellular matrix"/>
    <property type="evidence" value="ECO:0000247"/>
    <property type="project" value="MGI"/>
</dbReference>
<dbReference type="GO" id="GO:0005576">
    <property type="term" value="C:extracellular region"/>
    <property type="evidence" value="ECO:0000314"/>
    <property type="project" value="MGI"/>
</dbReference>
<dbReference type="GO" id="GO:0005509">
    <property type="term" value="F:calcium ion binding"/>
    <property type="evidence" value="ECO:0007669"/>
    <property type="project" value="InterPro"/>
</dbReference>
<dbReference type="GO" id="GO:0050431">
    <property type="term" value="F:transforming growth factor beta binding"/>
    <property type="evidence" value="ECO:0007669"/>
    <property type="project" value="Ensembl"/>
</dbReference>
<dbReference type="GO" id="GO:0030282">
    <property type="term" value="P:bone mineralization"/>
    <property type="evidence" value="ECO:0000315"/>
    <property type="project" value="MGI"/>
</dbReference>
<dbReference type="GO" id="GO:0060349">
    <property type="term" value="P:bone morphogenesis"/>
    <property type="evidence" value="ECO:0000315"/>
    <property type="project" value="MGI"/>
</dbReference>
<dbReference type="GO" id="GO:0046849">
    <property type="term" value="P:bone remodeling"/>
    <property type="evidence" value="ECO:0000315"/>
    <property type="project" value="MGI"/>
</dbReference>
<dbReference type="GO" id="GO:0002062">
    <property type="term" value="P:chondrocyte differentiation"/>
    <property type="evidence" value="ECO:0000315"/>
    <property type="project" value="MGI"/>
</dbReference>
<dbReference type="GO" id="GO:0060430">
    <property type="term" value="P:lung saccule development"/>
    <property type="evidence" value="ECO:0000315"/>
    <property type="project" value="MGI"/>
</dbReference>
<dbReference type="GO" id="GO:0030502">
    <property type="term" value="P:negative regulation of bone mineralization"/>
    <property type="evidence" value="ECO:0000315"/>
    <property type="project" value="MGI"/>
</dbReference>
<dbReference type="GO" id="GO:0032331">
    <property type="term" value="P:negative regulation of chondrocyte differentiation"/>
    <property type="evidence" value="ECO:0000315"/>
    <property type="project" value="MGI"/>
</dbReference>
<dbReference type="GO" id="GO:0045780">
    <property type="term" value="P:positive regulation of bone resorption"/>
    <property type="evidence" value="ECO:0000315"/>
    <property type="project" value="MGI"/>
</dbReference>
<dbReference type="GO" id="GO:2000741">
    <property type="term" value="P:positive regulation of mesenchymal stem cell differentiation"/>
    <property type="evidence" value="ECO:0007669"/>
    <property type="project" value="Ensembl"/>
</dbReference>
<dbReference type="GO" id="GO:1902462">
    <property type="term" value="P:positive regulation of mesenchymal stem cell proliferation"/>
    <property type="evidence" value="ECO:0007669"/>
    <property type="project" value="Ensembl"/>
</dbReference>
<dbReference type="GO" id="GO:0001501">
    <property type="term" value="P:skeletal system development"/>
    <property type="evidence" value="ECO:0000315"/>
    <property type="project" value="MGI"/>
</dbReference>
<dbReference type="GO" id="GO:0007179">
    <property type="term" value="P:transforming growth factor beta receptor signaling pathway"/>
    <property type="evidence" value="ECO:0000315"/>
    <property type="project" value="MGI"/>
</dbReference>
<dbReference type="CDD" id="cd00054">
    <property type="entry name" value="EGF_CA"/>
    <property type="match status" value="10"/>
</dbReference>
<dbReference type="FunFam" id="2.10.25.10:FF:000003">
    <property type="entry name" value="fibrillin-1 isoform X1"/>
    <property type="match status" value="1"/>
</dbReference>
<dbReference type="FunFam" id="2.10.25.10:FF:000068">
    <property type="entry name" value="Latent transforming growth factor beta binding protein 3"/>
    <property type="match status" value="2"/>
</dbReference>
<dbReference type="FunFam" id="2.10.25.10:FF:000349">
    <property type="entry name" value="Latent transforming growth factor beta binding protein 3"/>
    <property type="match status" value="1"/>
</dbReference>
<dbReference type="FunFam" id="3.90.290.10:FF:000015">
    <property type="entry name" value="Latent transforming growth factor beta binding protein 3"/>
    <property type="match status" value="1"/>
</dbReference>
<dbReference type="FunFam" id="2.10.25.10:FF:000019">
    <property type="entry name" value="latent-transforming growth factor beta-binding protein 1 isoform X2"/>
    <property type="match status" value="1"/>
</dbReference>
<dbReference type="FunFam" id="2.10.25.10:FF:000077">
    <property type="entry name" value="Latent-transforming growth factor beta-binding protein 3 isoform 1"/>
    <property type="match status" value="1"/>
</dbReference>
<dbReference type="FunFam" id="3.90.290.10:FF:000001">
    <property type="entry name" value="Latent-transforming growth factor beta-binding protein 3 isoform 1"/>
    <property type="match status" value="1"/>
</dbReference>
<dbReference type="FunFam" id="3.90.290.10:FF:000002">
    <property type="entry name" value="Latent-transforming growth factor beta-binding protein 3 isoform 1"/>
    <property type="match status" value="1"/>
</dbReference>
<dbReference type="FunFam" id="2.10.25.10:FF:000056">
    <property type="entry name" value="Latent-transforming growth factor beta-binding protein 3 isoform 2"/>
    <property type="match status" value="1"/>
</dbReference>
<dbReference type="FunFam" id="2.10.25.10:FF:000518">
    <property type="entry name" value="latent-transforming growth factor beta-binding protein 3 isoform X1"/>
    <property type="match status" value="1"/>
</dbReference>
<dbReference type="FunFam" id="2.10.25.10:FF:000245">
    <property type="entry name" value="latent-transforming growth factor beta-binding protein 3 isoform X2"/>
    <property type="match status" value="1"/>
</dbReference>
<dbReference type="FunFam" id="2.10.25.10:FF:000302">
    <property type="entry name" value="latent-transforming growth factor beta-binding protein 3 isoform X2"/>
    <property type="match status" value="1"/>
</dbReference>
<dbReference type="FunFam" id="2.10.25.10:FF:000317">
    <property type="entry name" value="latent-transforming growth factor beta-binding protein 3 isoform X2"/>
    <property type="match status" value="1"/>
</dbReference>
<dbReference type="FunFam" id="3.90.290.10:FF:000018">
    <property type="entry name" value="latent-transforming growth factor beta-binding protein 3 isoform X2"/>
    <property type="match status" value="1"/>
</dbReference>
<dbReference type="FunFam" id="2.10.25.10:FF:000017">
    <property type="entry name" value="latent-transforming growth factor beta-binding protein 4 isoform X1"/>
    <property type="match status" value="1"/>
</dbReference>
<dbReference type="FunFam" id="2.10.25.10:FF:000160">
    <property type="entry name" value="latent-transforming growth factor beta-binding protein 4 isoform X2"/>
    <property type="match status" value="1"/>
</dbReference>
<dbReference type="Gene3D" id="2.10.25.10">
    <property type="entry name" value="Laminin"/>
    <property type="match status" value="14"/>
</dbReference>
<dbReference type="Gene3D" id="3.90.290.10">
    <property type="entry name" value="TGF-beta binding (TB) domain"/>
    <property type="match status" value="4"/>
</dbReference>
<dbReference type="InterPro" id="IPR050751">
    <property type="entry name" value="ECM_structural_protein"/>
</dbReference>
<dbReference type="InterPro" id="IPR001881">
    <property type="entry name" value="EGF-like_Ca-bd_dom"/>
</dbReference>
<dbReference type="InterPro" id="IPR013032">
    <property type="entry name" value="EGF-like_CS"/>
</dbReference>
<dbReference type="InterPro" id="IPR000742">
    <property type="entry name" value="EGF-like_dom"/>
</dbReference>
<dbReference type="InterPro" id="IPR000152">
    <property type="entry name" value="EGF-type_Asp/Asn_hydroxyl_site"/>
</dbReference>
<dbReference type="InterPro" id="IPR018097">
    <property type="entry name" value="EGF_Ca-bd_CS"/>
</dbReference>
<dbReference type="InterPro" id="IPR009030">
    <property type="entry name" value="Growth_fac_rcpt_cys_sf"/>
</dbReference>
<dbReference type="InterPro" id="IPR049883">
    <property type="entry name" value="NOTCH1_EGF-like"/>
</dbReference>
<dbReference type="InterPro" id="IPR017878">
    <property type="entry name" value="TB_dom"/>
</dbReference>
<dbReference type="InterPro" id="IPR036773">
    <property type="entry name" value="TB_dom_sf"/>
</dbReference>
<dbReference type="PANTHER" id="PTHR24034">
    <property type="entry name" value="EGF-LIKE DOMAIN-CONTAINING PROTEIN"/>
    <property type="match status" value="1"/>
</dbReference>
<dbReference type="PANTHER" id="PTHR24034:SF209">
    <property type="entry name" value="EGF-LIKE DOMAIN-CONTAINING PROTEIN"/>
    <property type="match status" value="1"/>
</dbReference>
<dbReference type="Pfam" id="PF07645">
    <property type="entry name" value="EGF_CA"/>
    <property type="match status" value="11"/>
</dbReference>
<dbReference type="Pfam" id="PF12661">
    <property type="entry name" value="hEGF"/>
    <property type="match status" value="1"/>
</dbReference>
<dbReference type="Pfam" id="PF00683">
    <property type="entry name" value="TB"/>
    <property type="match status" value="4"/>
</dbReference>
<dbReference type="SMART" id="SM00181">
    <property type="entry name" value="EGF"/>
    <property type="match status" value="14"/>
</dbReference>
<dbReference type="SMART" id="SM00179">
    <property type="entry name" value="EGF_CA"/>
    <property type="match status" value="13"/>
</dbReference>
<dbReference type="SUPFAM" id="SSF57196">
    <property type="entry name" value="EGF/Laminin"/>
    <property type="match status" value="5"/>
</dbReference>
<dbReference type="SUPFAM" id="SSF57184">
    <property type="entry name" value="Growth factor receptor domain"/>
    <property type="match status" value="3"/>
</dbReference>
<dbReference type="SUPFAM" id="SSF57581">
    <property type="entry name" value="TB module/8-cys domain"/>
    <property type="match status" value="4"/>
</dbReference>
<dbReference type="PROSITE" id="PS00010">
    <property type="entry name" value="ASX_HYDROXYL"/>
    <property type="match status" value="10"/>
</dbReference>
<dbReference type="PROSITE" id="PS00022">
    <property type="entry name" value="EGF_1"/>
    <property type="match status" value="1"/>
</dbReference>
<dbReference type="PROSITE" id="PS01186">
    <property type="entry name" value="EGF_2"/>
    <property type="match status" value="7"/>
</dbReference>
<dbReference type="PROSITE" id="PS50026">
    <property type="entry name" value="EGF_3"/>
    <property type="match status" value="12"/>
</dbReference>
<dbReference type="PROSITE" id="PS01187">
    <property type="entry name" value="EGF_CA"/>
    <property type="match status" value="11"/>
</dbReference>
<dbReference type="PROSITE" id="PS51364">
    <property type="entry name" value="TB"/>
    <property type="match status" value="4"/>
</dbReference>
<keyword id="KW-0025">Alternative splicing</keyword>
<keyword id="KW-1015">Disulfide bond</keyword>
<keyword id="KW-0245">EGF-like domain</keyword>
<keyword id="KW-0272">Extracellular matrix</keyword>
<keyword id="KW-0325">Glycoprotein</keyword>
<keyword id="KW-0340">Growth factor binding</keyword>
<keyword id="KW-1185">Reference proteome</keyword>
<keyword id="KW-0677">Repeat</keyword>
<keyword id="KW-0964">Secreted</keyword>
<keyword id="KW-0732">Signal</keyword>
<name>LTBP3_MOUSE</name>
<feature type="signal peptide" evidence="3">
    <location>
        <begin position="1"/>
        <end position="38"/>
    </location>
</feature>
<feature type="chain" id="PRO_0000007647" description="Latent-transforming growth factor beta-binding protein 3">
    <location>
        <begin position="39"/>
        <end position="1253"/>
    </location>
</feature>
<feature type="domain" description="EGF-like 1" evidence="4">
    <location>
        <begin position="106"/>
        <end position="138"/>
    </location>
</feature>
<feature type="domain" description="TB 1" evidence="5">
    <location>
        <begin position="274"/>
        <end position="328"/>
    </location>
</feature>
<feature type="domain" description="EGF-like 2; calcium-binding" evidence="4">
    <location>
        <begin position="352"/>
        <end position="392"/>
    </location>
</feature>
<feature type="domain" description="TB 2" evidence="5">
    <location>
        <begin position="400"/>
        <end position="452"/>
    </location>
</feature>
<feature type="domain" description="EGF-like 3" evidence="4">
    <location>
        <begin position="571"/>
        <end position="612"/>
    </location>
</feature>
<feature type="domain" description="EGF-like 4; calcium-binding" evidence="4">
    <location>
        <begin position="613"/>
        <end position="656"/>
    </location>
</feature>
<feature type="domain" description="EGF-like 5; calcium-binding" evidence="4">
    <location>
        <begin position="657"/>
        <end position="699"/>
    </location>
</feature>
<feature type="domain" description="EGF-like 6; calcium-binding" evidence="4">
    <location>
        <begin position="741"/>
        <end position="781"/>
    </location>
</feature>
<feature type="domain" description="EGF-like 7; calcium-binding" evidence="4">
    <location>
        <begin position="782"/>
        <end position="822"/>
    </location>
</feature>
<feature type="domain" description="EGF-like 8; calcium-binding" evidence="4">
    <location>
        <begin position="823"/>
        <end position="861"/>
    </location>
</feature>
<feature type="domain" description="EGF-like 9; calcium-binding" evidence="4">
    <location>
        <begin position="863"/>
        <end position="905"/>
    </location>
</feature>
<feature type="domain" description="TB 3" evidence="5">
    <location>
        <begin position="914"/>
        <end position="968"/>
    </location>
</feature>
<feature type="domain" description="EGF-like 10; calcium-binding" evidence="4">
    <location>
        <begin position="990"/>
        <end position="1032"/>
    </location>
</feature>
<feature type="domain" description="EGF-like 11; calcium-binding" evidence="4">
    <location>
        <begin position="1033"/>
        <end position="1072"/>
    </location>
</feature>
<feature type="domain" description="TB 4" evidence="5">
    <location>
        <begin position="1086"/>
        <end position="1136"/>
    </location>
</feature>
<feature type="domain" description="EGF-like 12; calcium-binding" evidence="4">
    <location>
        <begin position="1204"/>
        <end position="1231"/>
    </location>
</feature>
<feature type="region of interest" description="Disordered" evidence="6">
    <location>
        <begin position="244"/>
        <end position="270"/>
    </location>
</feature>
<feature type="region of interest" description="Disordered" evidence="6">
    <location>
        <begin position="475"/>
        <end position="555"/>
    </location>
</feature>
<feature type="region of interest" description="Disordered" evidence="6">
    <location>
        <begin position="1138"/>
        <end position="1169"/>
    </location>
</feature>
<feature type="compositionally biased region" description="Polar residues" evidence="6">
    <location>
        <begin position="1138"/>
        <end position="1148"/>
    </location>
</feature>
<feature type="glycosylation site" description="N-linked (GlcNAc...) asparagine" evidence="3">
    <location>
        <position position="86"/>
    </location>
</feature>
<feature type="glycosylation site" description="N-linked (GlcNAc...) asparagine" evidence="3">
    <location>
        <position position="346"/>
    </location>
</feature>
<feature type="glycosylation site" description="N-linked (GlcNAc...) asparagine" evidence="3">
    <location>
        <position position="842"/>
    </location>
</feature>
<feature type="glycosylation site" description="N-linked (GlcNAc...) asparagine" evidence="3">
    <location>
        <position position="933"/>
    </location>
</feature>
<feature type="glycosylation site" description="N-linked (GlcNAc...) asparagine" evidence="3">
    <location>
        <position position="1225"/>
    </location>
</feature>
<feature type="disulfide bond" evidence="4">
    <location>
        <begin position="110"/>
        <end position="120"/>
    </location>
</feature>
<feature type="disulfide bond" evidence="4">
    <location>
        <begin position="114"/>
        <end position="126"/>
    </location>
</feature>
<feature type="disulfide bond" evidence="4">
    <location>
        <begin position="128"/>
        <end position="137"/>
    </location>
</feature>
<feature type="disulfide bond" evidence="5">
    <location>
        <begin position="276"/>
        <end position="300"/>
    </location>
</feature>
<feature type="disulfide bond" evidence="5">
    <location>
        <begin position="286"/>
        <end position="313"/>
    </location>
</feature>
<feature type="disulfide bond" evidence="5">
    <location>
        <begin position="301"/>
        <end position="316"/>
    </location>
</feature>
<feature type="disulfide bond" evidence="4">
    <location>
        <begin position="356"/>
        <end position="367"/>
    </location>
</feature>
<feature type="disulfide bond" evidence="4">
    <location>
        <begin position="362"/>
        <end position="376"/>
    </location>
</feature>
<feature type="disulfide bond" evidence="4">
    <location>
        <begin position="378"/>
        <end position="391"/>
    </location>
</feature>
<feature type="disulfide bond" evidence="5">
    <location>
        <begin position="402"/>
        <end position="425"/>
    </location>
</feature>
<feature type="disulfide bond" evidence="5">
    <location>
        <begin position="412"/>
        <end position="437"/>
    </location>
</feature>
<feature type="disulfide bond" evidence="5">
    <location>
        <begin position="426"/>
        <end position="440"/>
    </location>
</feature>
<feature type="disulfide bond" evidence="5">
    <location>
        <begin position="427"/>
        <end position="452"/>
    </location>
</feature>
<feature type="disulfide bond" evidence="4">
    <location>
        <begin position="575"/>
        <end position="587"/>
    </location>
</feature>
<feature type="disulfide bond" evidence="4">
    <location>
        <begin position="582"/>
        <end position="596"/>
    </location>
</feature>
<feature type="disulfide bond" evidence="4">
    <location>
        <begin position="598"/>
        <end position="611"/>
    </location>
</feature>
<feature type="disulfide bond" evidence="4">
    <location>
        <begin position="617"/>
        <end position="629"/>
    </location>
</feature>
<feature type="disulfide bond" evidence="4">
    <location>
        <begin position="622"/>
        <end position="638"/>
    </location>
</feature>
<feature type="disulfide bond" evidence="4">
    <location>
        <begin position="661"/>
        <end position="673"/>
    </location>
</feature>
<feature type="disulfide bond" evidence="4">
    <location>
        <begin position="667"/>
        <end position="682"/>
    </location>
</feature>
<feature type="disulfide bond" evidence="4">
    <location>
        <begin position="684"/>
        <end position="698"/>
    </location>
</feature>
<feature type="disulfide bond" evidence="4">
    <location>
        <begin position="745"/>
        <end position="756"/>
    </location>
</feature>
<feature type="disulfide bond" evidence="4">
    <location>
        <begin position="751"/>
        <end position="765"/>
    </location>
</feature>
<feature type="disulfide bond" evidence="4">
    <location>
        <begin position="767"/>
        <end position="780"/>
    </location>
</feature>
<feature type="disulfide bond" evidence="4">
    <location>
        <begin position="786"/>
        <end position="797"/>
    </location>
</feature>
<feature type="disulfide bond" evidence="4">
    <location>
        <begin position="792"/>
        <end position="806"/>
    </location>
</feature>
<feature type="disulfide bond" evidence="4">
    <location>
        <begin position="808"/>
        <end position="821"/>
    </location>
</feature>
<feature type="disulfide bond" evidence="4">
    <location>
        <begin position="827"/>
        <end position="838"/>
    </location>
</feature>
<feature type="disulfide bond" evidence="4">
    <location>
        <begin position="833"/>
        <end position="847"/>
    </location>
</feature>
<feature type="disulfide bond" evidence="4">
    <location>
        <begin position="849"/>
        <end position="861"/>
    </location>
</feature>
<feature type="disulfide bond" evidence="4">
    <location>
        <begin position="867"/>
        <end position="880"/>
    </location>
</feature>
<feature type="disulfide bond" evidence="4">
    <location>
        <begin position="874"/>
        <end position="889"/>
    </location>
</feature>
<feature type="disulfide bond" evidence="4">
    <location>
        <begin position="891"/>
        <end position="904"/>
    </location>
</feature>
<feature type="disulfide bond" evidence="5">
    <location>
        <begin position="916"/>
        <end position="939"/>
    </location>
</feature>
<feature type="disulfide bond" evidence="5">
    <location>
        <begin position="926"/>
        <end position="951"/>
    </location>
</feature>
<feature type="disulfide bond" description="Interchain (with C-33 in TGFB1); in linked form" evidence="1">
    <location>
        <position position="926"/>
    </location>
</feature>
<feature type="disulfide bond" evidence="5">
    <location>
        <begin position="940"/>
        <end position="956"/>
    </location>
</feature>
<feature type="disulfide bond" evidence="5">
    <location>
        <begin position="941"/>
        <end position="968"/>
    </location>
</feature>
<feature type="disulfide bond" description="Interchain (with C-33 in TGFB1); in linked form" evidence="1">
    <location>
        <position position="951"/>
    </location>
</feature>
<feature type="disulfide bond" evidence="4">
    <location>
        <begin position="994"/>
        <end position="1007"/>
    </location>
</feature>
<feature type="disulfide bond" evidence="4">
    <location>
        <begin position="1002"/>
        <end position="1016"/>
    </location>
</feature>
<feature type="disulfide bond" evidence="4">
    <location>
        <begin position="1018"/>
        <end position="1031"/>
    </location>
</feature>
<feature type="disulfide bond" evidence="4">
    <location>
        <begin position="1037"/>
        <end position="1048"/>
    </location>
</feature>
<feature type="disulfide bond" evidence="4">
    <location>
        <begin position="1043"/>
        <end position="1057"/>
    </location>
</feature>
<feature type="disulfide bond" evidence="4">
    <location>
        <begin position="1059"/>
        <end position="1072"/>
    </location>
</feature>
<feature type="disulfide bond" evidence="5">
    <location>
        <begin position="1113"/>
        <end position="1127"/>
    </location>
</feature>
<feature type="disulfide bond" evidence="5">
    <location>
        <begin position="1114"/>
        <end position="1136"/>
    </location>
</feature>
<feature type="disulfide bond" evidence="4">
    <location>
        <begin position="1208"/>
        <end position="1223"/>
    </location>
</feature>
<feature type="disulfide bond" evidence="4">
    <location>
        <begin position="1218"/>
        <end position="1232"/>
    </location>
</feature>
<feature type="splice variant" id="VSP_009242" description="In isoform 2." evidence="12">
    <original>DIDECSQDPGLCLPHGACENLQ</original>
    <variation>GMRSWPGILKGEAGQCDLFDTL</variation>
    <location>
        <begin position="863"/>
        <end position="884"/>
    </location>
</feature>
<feature type="splice variant" id="VSP_009243" description="In isoform 2." evidence="12">
    <location>
        <begin position="885"/>
        <end position="1253"/>
    </location>
</feature>
<feature type="sequence conflict" description="In Ref. 2; BAC38053." evidence="13" ref="2">
    <original>R</original>
    <variation>H</variation>
    <location>
        <position position="16"/>
    </location>
</feature>
<feature type="sequence conflict" description="In Ref. 1; AAB53015." evidence="13" ref="1">
    <original>A</original>
    <variation>G</variation>
    <location>
        <position position="20"/>
    </location>
</feature>
<feature type="sequence conflict" description="In Ref. 1; AAB53015." evidence="13" ref="1">
    <location>
        <position position="35"/>
    </location>
</feature>
<feature type="sequence conflict" description="In Ref. 1; AAB53015." evidence="13" ref="1">
    <original>E</original>
    <variation>Q</variation>
    <location>
        <position position="45"/>
    </location>
</feature>
<feature type="sequence conflict" description="In Ref. 1; AAB53015." evidence="13" ref="1">
    <original>G</original>
    <variation>A</variation>
    <location>
        <position position="104"/>
    </location>
</feature>
<feature type="sequence conflict" description="In Ref. 2; BAC38053." evidence="13" ref="2">
    <original>E</original>
    <variation>Q</variation>
    <location>
        <position position="172"/>
    </location>
</feature>
<feature type="sequence conflict" description="In Ref. 1; AAB53015." evidence="13" ref="1">
    <original>Q</original>
    <variation>P</variation>
    <location>
        <position position="263"/>
    </location>
</feature>
<feature type="sequence conflict" description="In Ref. 1; AAB53015." evidence="13" ref="1">
    <original>G</original>
    <variation>V</variation>
    <location>
        <position position="328"/>
    </location>
</feature>
<feature type="sequence conflict" description="In Ref. 1; AAB53015." evidence="13" ref="1">
    <original>MCR</original>
    <variation>NVC</variation>
    <location>
        <begin position="361"/>
        <end position="363"/>
    </location>
</feature>
<feature type="sequence conflict" description="In Ref. 1; AAB53015." evidence="13" ref="1">
    <original>SRT</original>
    <variation>LAA</variation>
    <location>
        <begin position="387"/>
        <end position="389"/>
    </location>
</feature>
<feature type="sequence conflict" description="In Ref. 1; AAB53015." evidence="13" ref="1">
    <location>
        <position position="454"/>
    </location>
</feature>
<feature type="sequence conflict" description="In Ref. 1; AAB53015." evidence="13" ref="1">
    <original>T</original>
    <variation>A</variation>
    <location>
        <position position="662"/>
    </location>
</feature>
<feature type="sequence conflict" description="In Ref. 1; AAB53015." evidence="13" ref="1">
    <original>Q</original>
    <variation>L</variation>
    <location>
        <position position="851"/>
    </location>
</feature>